<sequence>MQQRRPVRRALLSVSDKAGIVEFAQALSARGVELLSTGGTARLLAEKGLPVTEVSDYTGFPEMMDGRVKTLHPKVHGGILGRRGQDDAIMEEHQIQPIDMVVVNLYPFAQTVAREGCSLEDAVENIDIGGPTMVRSAAKNHKDVAIVVKSSDYDAIIKEMDDNEGSLTLATRFDLAIKAFEHTAAYDSMIANYFGSMVPAYHGESKEAAGRFPRTLNLNFIKKQDMRYGENSHQQAAFYIEENVKEASVATATQVQGKALSYNNIADTDAALECVKEFAEPACVIVKHANPCGVAIGNSILDAYDRAYKTDPTSAFGGIIAFNRELDAETAQAIISRQFVEVIIAPSASEEALKITAAKQNVRVLTCGQWGERVPGLDFKRVNGGLLVQDRDLGMVGAEELRVVTQRQPTEQELRDALFCWKVAKFVKSNAIVYAKNNMTIGIGAGQMSRVYSAKIAGIKAADEGLEVKGSSMASDAFFPFRDGIDAAAAAGVTCVIQPGGSIRDDEVIAAADEHGIAMLFTDMRHFRH</sequence>
<proteinExistence type="inferred from homology"/>
<evidence type="ECO:0000255" key="1">
    <source>
        <dbReference type="HAMAP-Rule" id="MF_00139"/>
    </source>
</evidence>
<evidence type="ECO:0000255" key="2">
    <source>
        <dbReference type="PROSITE-ProRule" id="PRU01202"/>
    </source>
</evidence>
<comment type="catalytic activity">
    <reaction evidence="1">
        <text>(6R)-10-formyltetrahydrofolate + 5-amino-1-(5-phospho-beta-D-ribosyl)imidazole-4-carboxamide = 5-formamido-1-(5-phospho-D-ribosyl)imidazole-4-carboxamide + (6S)-5,6,7,8-tetrahydrofolate</text>
        <dbReference type="Rhea" id="RHEA:22192"/>
        <dbReference type="ChEBI" id="CHEBI:57453"/>
        <dbReference type="ChEBI" id="CHEBI:58467"/>
        <dbReference type="ChEBI" id="CHEBI:58475"/>
        <dbReference type="ChEBI" id="CHEBI:195366"/>
        <dbReference type="EC" id="2.1.2.3"/>
    </reaction>
</comment>
<comment type="catalytic activity">
    <reaction evidence="1">
        <text>IMP + H2O = 5-formamido-1-(5-phospho-D-ribosyl)imidazole-4-carboxamide</text>
        <dbReference type="Rhea" id="RHEA:18445"/>
        <dbReference type="ChEBI" id="CHEBI:15377"/>
        <dbReference type="ChEBI" id="CHEBI:58053"/>
        <dbReference type="ChEBI" id="CHEBI:58467"/>
        <dbReference type="EC" id="3.5.4.10"/>
    </reaction>
</comment>
<comment type="pathway">
    <text evidence="1">Purine metabolism; IMP biosynthesis via de novo pathway; 5-formamido-1-(5-phospho-D-ribosyl)imidazole-4-carboxamide from 5-amino-1-(5-phospho-D-ribosyl)imidazole-4-carboxamide (10-formyl THF route): step 1/1.</text>
</comment>
<comment type="pathway">
    <text evidence="1">Purine metabolism; IMP biosynthesis via de novo pathway; IMP from 5-formamido-1-(5-phospho-D-ribosyl)imidazole-4-carboxamide: step 1/1.</text>
</comment>
<comment type="domain">
    <text evidence="1">The IMP cyclohydrolase activity resides in the N-terminal region.</text>
</comment>
<comment type="similarity">
    <text evidence="1">Belongs to the PurH family.</text>
</comment>
<dbReference type="EC" id="2.1.2.3" evidence="1"/>
<dbReference type="EC" id="3.5.4.10" evidence="1"/>
<dbReference type="EMBL" id="CP000036">
    <property type="protein sequence ID" value="ABB68467.1"/>
    <property type="molecule type" value="Genomic_DNA"/>
</dbReference>
<dbReference type="RefSeq" id="WP_001187566.1">
    <property type="nucleotide sequence ID" value="NC_007613.1"/>
</dbReference>
<dbReference type="SMR" id="Q31TZ1"/>
<dbReference type="KEGG" id="sbo:SBO_4027"/>
<dbReference type="HOGENOM" id="CLU_016316_5_2_6"/>
<dbReference type="UniPathway" id="UPA00074">
    <property type="reaction ID" value="UER00133"/>
</dbReference>
<dbReference type="UniPathway" id="UPA00074">
    <property type="reaction ID" value="UER00135"/>
</dbReference>
<dbReference type="Proteomes" id="UP000007067">
    <property type="component" value="Chromosome"/>
</dbReference>
<dbReference type="GO" id="GO:0005829">
    <property type="term" value="C:cytosol"/>
    <property type="evidence" value="ECO:0007669"/>
    <property type="project" value="TreeGrafter"/>
</dbReference>
<dbReference type="GO" id="GO:0003937">
    <property type="term" value="F:IMP cyclohydrolase activity"/>
    <property type="evidence" value="ECO:0007669"/>
    <property type="project" value="UniProtKB-UniRule"/>
</dbReference>
<dbReference type="GO" id="GO:0004643">
    <property type="term" value="F:phosphoribosylaminoimidazolecarboxamide formyltransferase activity"/>
    <property type="evidence" value="ECO:0007669"/>
    <property type="project" value="UniProtKB-UniRule"/>
</dbReference>
<dbReference type="GO" id="GO:0006189">
    <property type="term" value="P:'de novo' IMP biosynthetic process"/>
    <property type="evidence" value="ECO:0007669"/>
    <property type="project" value="UniProtKB-UniRule"/>
</dbReference>
<dbReference type="CDD" id="cd01421">
    <property type="entry name" value="IMPCH"/>
    <property type="match status" value="1"/>
</dbReference>
<dbReference type="FunFam" id="3.40.140.20:FF:000001">
    <property type="entry name" value="Bifunctional purine biosynthesis protein PurH"/>
    <property type="match status" value="1"/>
</dbReference>
<dbReference type="FunFam" id="3.40.140.20:FF:000002">
    <property type="entry name" value="Bifunctional purine biosynthesis protein PurH"/>
    <property type="match status" value="1"/>
</dbReference>
<dbReference type="FunFam" id="3.40.50.1380:FF:000001">
    <property type="entry name" value="Bifunctional purine biosynthesis protein PurH"/>
    <property type="match status" value="1"/>
</dbReference>
<dbReference type="Gene3D" id="3.40.140.20">
    <property type="match status" value="2"/>
</dbReference>
<dbReference type="Gene3D" id="3.40.50.1380">
    <property type="entry name" value="Methylglyoxal synthase-like domain"/>
    <property type="match status" value="1"/>
</dbReference>
<dbReference type="HAMAP" id="MF_00139">
    <property type="entry name" value="PurH"/>
    <property type="match status" value="1"/>
</dbReference>
<dbReference type="InterPro" id="IPR024051">
    <property type="entry name" value="AICAR_Tfase_dup_dom_sf"/>
</dbReference>
<dbReference type="InterPro" id="IPR016193">
    <property type="entry name" value="Cytidine_deaminase-like"/>
</dbReference>
<dbReference type="InterPro" id="IPR011607">
    <property type="entry name" value="MGS-like_dom"/>
</dbReference>
<dbReference type="InterPro" id="IPR036914">
    <property type="entry name" value="MGS-like_dom_sf"/>
</dbReference>
<dbReference type="InterPro" id="IPR002695">
    <property type="entry name" value="PurH-like"/>
</dbReference>
<dbReference type="NCBIfam" id="NF002049">
    <property type="entry name" value="PRK00881.1"/>
    <property type="match status" value="1"/>
</dbReference>
<dbReference type="NCBIfam" id="TIGR00355">
    <property type="entry name" value="purH"/>
    <property type="match status" value="1"/>
</dbReference>
<dbReference type="PANTHER" id="PTHR11692:SF0">
    <property type="entry name" value="BIFUNCTIONAL PURINE BIOSYNTHESIS PROTEIN ATIC"/>
    <property type="match status" value="1"/>
</dbReference>
<dbReference type="PANTHER" id="PTHR11692">
    <property type="entry name" value="BIFUNCTIONAL PURINE BIOSYNTHESIS PROTEIN PURH"/>
    <property type="match status" value="1"/>
</dbReference>
<dbReference type="Pfam" id="PF01808">
    <property type="entry name" value="AICARFT_IMPCHas"/>
    <property type="match status" value="1"/>
</dbReference>
<dbReference type="Pfam" id="PF02142">
    <property type="entry name" value="MGS"/>
    <property type="match status" value="1"/>
</dbReference>
<dbReference type="PIRSF" id="PIRSF000414">
    <property type="entry name" value="AICARFT_IMPCHas"/>
    <property type="match status" value="1"/>
</dbReference>
<dbReference type="SMART" id="SM00798">
    <property type="entry name" value="AICARFT_IMPCHas"/>
    <property type="match status" value="1"/>
</dbReference>
<dbReference type="SMART" id="SM00851">
    <property type="entry name" value="MGS"/>
    <property type="match status" value="1"/>
</dbReference>
<dbReference type="SUPFAM" id="SSF53927">
    <property type="entry name" value="Cytidine deaminase-like"/>
    <property type="match status" value="1"/>
</dbReference>
<dbReference type="SUPFAM" id="SSF52335">
    <property type="entry name" value="Methylglyoxal synthase-like"/>
    <property type="match status" value="1"/>
</dbReference>
<dbReference type="PROSITE" id="PS51855">
    <property type="entry name" value="MGS"/>
    <property type="match status" value="1"/>
</dbReference>
<accession>Q31TZ1</accession>
<gene>
    <name evidence="1" type="primary">purH</name>
    <name type="ordered locus">SBO_4027</name>
</gene>
<protein>
    <recommendedName>
        <fullName evidence="1">Bifunctional purine biosynthesis protein PurH</fullName>
    </recommendedName>
    <domain>
        <recommendedName>
            <fullName evidence="1">Phosphoribosylaminoimidazolecarboxamide formyltransferase</fullName>
            <ecNumber evidence="1">2.1.2.3</ecNumber>
        </recommendedName>
        <alternativeName>
            <fullName evidence="1">AICAR transformylase</fullName>
        </alternativeName>
    </domain>
    <domain>
        <recommendedName>
            <fullName evidence="1">IMP cyclohydrolase</fullName>
            <ecNumber evidence="1">3.5.4.10</ecNumber>
        </recommendedName>
        <alternativeName>
            <fullName evidence="1">ATIC</fullName>
        </alternativeName>
        <alternativeName>
            <fullName evidence="1">IMP synthase</fullName>
        </alternativeName>
        <alternativeName>
            <fullName evidence="1">Inosinicase</fullName>
        </alternativeName>
    </domain>
</protein>
<organism>
    <name type="scientific">Shigella boydii serotype 4 (strain Sb227)</name>
    <dbReference type="NCBI Taxonomy" id="300268"/>
    <lineage>
        <taxon>Bacteria</taxon>
        <taxon>Pseudomonadati</taxon>
        <taxon>Pseudomonadota</taxon>
        <taxon>Gammaproteobacteria</taxon>
        <taxon>Enterobacterales</taxon>
        <taxon>Enterobacteriaceae</taxon>
        <taxon>Shigella</taxon>
    </lineage>
</organism>
<keyword id="KW-0007">Acetylation</keyword>
<keyword id="KW-0378">Hydrolase</keyword>
<keyword id="KW-0511">Multifunctional enzyme</keyword>
<keyword id="KW-0658">Purine biosynthesis</keyword>
<keyword id="KW-0808">Transferase</keyword>
<reference key="1">
    <citation type="journal article" date="2005" name="Nucleic Acids Res.">
        <title>Genome dynamics and diversity of Shigella species, the etiologic agents of bacillary dysentery.</title>
        <authorList>
            <person name="Yang F."/>
            <person name="Yang J."/>
            <person name="Zhang X."/>
            <person name="Chen L."/>
            <person name="Jiang Y."/>
            <person name="Yan Y."/>
            <person name="Tang X."/>
            <person name="Wang J."/>
            <person name="Xiong Z."/>
            <person name="Dong J."/>
            <person name="Xue Y."/>
            <person name="Zhu Y."/>
            <person name="Xu X."/>
            <person name="Sun L."/>
            <person name="Chen S."/>
            <person name="Nie H."/>
            <person name="Peng J."/>
            <person name="Xu J."/>
            <person name="Wang Y."/>
            <person name="Yuan Z."/>
            <person name="Wen Y."/>
            <person name="Yao Z."/>
            <person name="Shen Y."/>
            <person name="Qiang B."/>
            <person name="Hou Y."/>
            <person name="Yu J."/>
            <person name="Jin Q."/>
        </authorList>
    </citation>
    <scope>NUCLEOTIDE SEQUENCE [LARGE SCALE GENOMIC DNA]</scope>
    <source>
        <strain>Sb227</strain>
    </source>
</reference>
<feature type="chain" id="PRO_1000018954" description="Bifunctional purine biosynthesis protein PurH">
    <location>
        <begin position="1"/>
        <end position="529"/>
    </location>
</feature>
<feature type="domain" description="MGS-like" evidence="2">
    <location>
        <begin position="1"/>
        <end position="148"/>
    </location>
</feature>
<feature type="modified residue" description="N6-acetyllysine" evidence="1">
    <location>
        <position position="287"/>
    </location>
</feature>
<name>PUR9_SHIBS</name>